<dbReference type="EMBL" id="CP000887">
    <property type="protein sequence ID" value="ACD73220.1"/>
    <property type="molecule type" value="Genomic_DNA"/>
</dbReference>
<dbReference type="RefSeq" id="WP_002966978.1">
    <property type="nucleotide sequence ID" value="NC_010742.1"/>
</dbReference>
<dbReference type="SMR" id="B2S811"/>
<dbReference type="GeneID" id="93017813"/>
<dbReference type="KEGG" id="bmc:BAbS19_I17380"/>
<dbReference type="HOGENOM" id="CLU_061463_1_1_5"/>
<dbReference type="Proteomes" id="UP000002565">
    <property type="component" value="Chromosome 1"/>
</dbReference>
<dbReference type="GO" id="GO:0005737">
    <property type="term" value="C:cytoplasm"/>
    <property type="evidence" value="ECO:0007669"/>
    <property type="project" value="UniProtKB-ARBA"/>
</dbReference>
<dbReference type="GO" id="GO:1990904">
    <property type="term" value="C:ribonucleoprotein complex"/>
    <property type="evidence" value="ECO:0007669"/>
    <property type="project" value="UniProtKB-KW"/>
</dbReference>
<dbReference type="GO" id="GO:0005840">
    <property type="term" value="C:ribosome"/>
    <property type="evidence" value="ECO:0007669"/>
    <property type="project" value="UniProtKB-KW"/>
</dbReference>
<dbReference type="GO" id="GO:0019843">
    <property type="term" value="F:rRNA binding"/>
    <property type="evidence" value="ECO:0007669"/>
    <property type="project" value="UniProtKB-UniRule"/>
</dbReference>
<dbReference type="GO" id="GO:0003735">
    <property type="term" value="F:structural constituent of ribosome"/>
    <property type="evidence" value="ECO:0007669"/>
    <property type="project" value="InterPro"/>
</dbReference>
<dbReference type="GO" id="GO:0006412">
    <property type="term" value="P:translation"/>
    <property type="evidence" value="ECO:0007669"/>
    <property type="project" value="UniProtKB-UniRule"/>
</dbReference>
<dbReference type="HAMAP" id="MF_01363">
    <property type="entry name" value="Ribosomal_bL21"/>
    <property type="match status" value="1"/>
</dbReference>
<dbReference type="InterPro" id="IPR028909">
    <property type="entry name" value="bL21-like"/>
</dbReference>
<dbReference type="InterPro" id="IPR036164">
    <property type="entry name" value="bL21-like_sf"/>
</dbReference>
<dbReference type="InterPro" id="IPR001787">
    <property type="entry name" value="Ribosomal_bL21"/>
</dbReference>
<dbReference type="NCBIfam" id="TIGR00061">
    <property type="entry name" value="L21"/>
    <property type="match status" value="1"/>
</dbReference>
<dbReference type="PANTHER" id="PTHR21349">
    <property type="entry name" value="50S RIBOSOMAL PROTEIN L21"/>
    <property type="match status" value="1"/>
</dbReference>
<dbReference type="PANTHER" id="PTHR21349:SF0">
    <property type="entry name" value="LARGE RIBOSOMAL SUBUNIT PROTEIN BL21M"/>
    <property type="match status" value="1"/>
</dbReference>
<dbReference type="Pfam" id="PF00829">
    <property type="entry name" value="Ribosomal_L21p"/>
    <property type="match status" value="1"/>
</dbReference>
<dbReference type="SUPFAM" id="SSF141091">
    <property type="entry name" value="L21p-like"/>
    <property type="match status" value="1"/>
</dbReference>
<feature type="chain" id="PRO_1000143762" description="Large ribosomal subunit protein bL21">
    <location>
        <begin position="1"/>
        <end position="142"/>
    </location>
</feature>
<feature type="region of interest" description="Disordered" evidence="2">
    <location>
        <begin position="74"/>
        <end position="142"/>
    </location>
</feature>
<feature type="compositionally biased region" description="Basic residues" evidence="2">
    <location>
        <begin position="74"/>
        <end position="84"/>
    </location>
</feature>
<feature type="compositionally biased region" description="Basic and acidic residues" evidence="2">
    <location>
        <begin position="107"/>
        <end position="125"/>
    </location>
</feature>
<feature type="compositionally biased region" description="Basic residues" evidence="2">
    <location>
        <begin position="126"/>
        <end position="135"/>
    </location>
</feature>
<organism>
    <name type="scientific">Brucella abortus (strain S19)</name>
    <dbReference type="NCBI Taxonomy" id="430066"/>
    <lineage>
        <taxon>Bacteria</taxon>
        <taxon>Pseudomonadati</taxon>
        <taxon>Pseudomonadota</taxon>
        <taxon>Alphaproteobacteria</taxon>
        <taxon>Hyphomicrobiales</taxon>
        <taxon>Brucellaceae</taxon>
        <taxon>Brucella/Ochrobactrum group</taxon>
        <taxon>Brucella</taxon>
    </lineage>
</organism>
<gene>
    <name evidence="1" type="primary">rplU</name>
    <name type="ordered locus">BAbS19_I17380</name>
</gene>
<proteinExistence type="inferred from homology"/>
<sequence length="142" mass="15067">MFAVIKTGGKQYRVAANDLIKVEKVAGEAGDIVEFAEVLMVGSTIGAPTVAGSLVTAEVVEQGRGRKVIAFKKRRRQNSKRTRGHRQELTTIRISEILTDGAKPSKKAAEKKAPKADAAEGEAAKPKKAAPKKAATKAESAE</sequence>
<name>RL21_BRUA1</name>
<reference key="1">
    <citation type="journal article" date="2008" name="PLoS ONE">
        <title>Genome sequence of Brucella abortus vaccine strain S19 compared to virulent strains yields candidate virulence genes.</title>
        <authorList>
            <person name="Crasta O.R."/>
            <person name="Folkerts O."/>
            <person name="Fei Z."/>
            <person name="Mane S.P."/>
            <person name="Evans C."/>
            <person name="Martino-Catt S."/>
            <person name="Bricker B."/>
            <person name="Yu G."/>
            <person name="Du L."/>
            <person name="Sobral B.W."/>
        </authorList>
    </citation>
    <scope>NUCLEOTIDE SEQUENCE [LARGE SCALE GENOMIC DNA]</scope>
    <source>
        <strain>S19</strain>
    </source>
</reference>
<protein>
    <recommendedName>
        <fullName evidence="1">Large ribosomal subunit protein bL21</fullName>
    </recommendedName>
    <alternativeName>
        <fullName evidence="3">50S ribosomal protein L21</fullName>
    </alternativeName>
</protein>
<comment type="function">
    <text evidence="1">This protein binds to 23S rRNA in the presence of protein L20.</text>
</comment>
<comment type="subunit">
    <text evidence="1">Part of the 50S ribosomal subunit. Contacts protein L20.</text>
</comment>
<comment type="similarity">
    <text evidence="1">Belongs to the bacterial ribosomal protein bL21 family.</text>
</comment>
<keyword id="KW-0687">Ribonucleoprotein</keyword>
<keyword id="KW-0689">Ribosomal protein</keyword>
<keyword id="KW-0694">RNA-binding</keyword>
<keyword id="KW-0699">rRNA-binding</keyword>
<evidence type="ECO:0000255" key="1">
    <source>
        <dbReference type="HAMAP-Rule" id="MF_01363"/>
    </source>
</evidence>
<evidence type="ECO:0000256" key="2">
    <source>
        <dbReference type="SAM" id="MobiDB-lite"/>
    </source>
</evidence>
<evidence type="ECO:0000305" key="3"/>
<accession>B2S811</accession>